<comment type="function">
    <text evidence="1">Involved in DNA damage tolerance by regulating translesion synthesis (TLS) of templates carrying DNA damage lesions such as 8oxoG and abasic sites. May act by stimulating activity of DNA polymerases involved in TLS, such as PRIMPOL and polymerase delta (POLD1).</text>
</comment>
<comment type="subunit">
    <text evidence="1">Interacts with PCNA and POLD2. Interacts with SSBP1. Interacts with PRIMPOL; leading to enhance DNA polymerase activity of PRIMPOL. Interacts with POLH. Interacts with POLD1; leading to stimulate DNA polymerase activity of POLD1.</text>
</comment>
<comment type="subcellular location">
    <subcellularLocation>
        <location evidence="1">Mitochondrion matrix</location>
    </subcellularLocation>
    <subcellularLocation>
        <location evidence="1">Nucleus</location>
    </subcellularLocation>
    <text evidence="1">Mainly localizes to the mitochondrial matrix; a small fraction localizes in the nucleus.</text>
</comment>
<proteinExistence type="evidence at protein level"/>
<sequence>MAGCVARRALAVGSRWWSRSLATTRGSRPLCAVGGAGGLPPVATATTRRHLSSRNRAEGKVLETVGVFEVPKQNGKYETGQLFLHSVFGYRGVVLFPWQARLYDRDVASATPEKAENPAGHGSKEVKGKTHTYYQVLIDARDCPHISQRSQTEAVTFLANHDDSRALYAIPGLDYVSHEDILPYTSTDQVPIQHELFERFLLYDQTKAPPFVARETLRAWQEKNHPWLELSDVHRETTENIRVTVIPFYMGMREAQNSHVYWWRYCIRLENLDSDVVQLRERHWRIFSLSGTLETVRGRGVVGREPVLSKEQPAFQYSSHVSLQASSGHMWGTFRFERPDGSHFDVRIPPFSLESNKDEKTPPSGLHW</sequence>
<keyword id="KW-0227">DNA damage</keyword>
<keyword id="KW-0234">DNA repair</keyword>
<keyword id="KW-0496">Mitochondrion</keyword>
<keyword id="KW-0539">Nucleus</keyword>
<keyword id="KW-0597">Phosphoprotein</keyword>
<keyword id="KW-1185">Reference proteome</keyword>
<keyword id="KW-0809">Transit peptide</keyword>
<gene>
    <name evidence="4" type="primary">Poldip2</name>
</gene>
<name>PDIP2_MOUSE</name>
<accession>Q91VA6</accession>
<dbReference type="EMBL" id="BC006833">
    <property type="protein sequence ID" value="AAH06833.1"/>
    <property type="molecule type" value="mRNA"/>
</dbReference>
<dbReference type="EMBL" id="BC012879">
    <property type="protein sequence ID" value="AAH12879.1"/>
    <property type="molecule type" value="mRNA"/>
</dbReference>
<dbReference type="CCDS" id="CCDS25109.1"/>
<dbReference type="RefSeq" id="NP_080665.1">
    <property type="nucleotide sequence ID" value="NM_026389.4"/>
</dbReference>
<dbReference type="SMR" id="Q91VA6"/>
<dbReference type="BioGRID" id="212455">
    <property type="interactions" value="5"/>
</dbReference>
<dbReference type="FunCoup" id="Q91VA6">
    <property type="interactions" value="2938"/>
</dbReference>
<dbReference type="STRING" id="10090.ENSMUSP00000001127"/>
<dbReference type="iPTMnet" id="Q91VA6"/>
<dbReference type="PhosphoSitePlus" id="Q91VA6"/>
<dbReference type="SwissPalm" id="Q91VA6"/>
<dbReference type="jPOST" id="Q91VA6"/>
<dbReference type="PaxDb" id="10090-ENSMUSP00000001127"/>
<dbReference type="PeptideAtlas" id="Q91VA6"/>
<dbReference type="ProteomicsDB" id="288082"/>
<dbReference type="Pumba" id="Q91VA6"/>
<dbReference type="Antibodypedia" id="69152">
    <property type="antibodies" value="215 antibodies from 29 providers"/>
</dbReference>
<dbReference type="DNASU" id="67811"/>
<dbReference type="Ensembl" id="ENSMUST00000001127.11">
    <property type="protein sequence ID" value="ENSMUSP00000001127.5"/>
    <property type="gene ID" value="ENSMUSG00000001100.11"/>
</dbReference>
<dbReference type="GeneID" id="67811"/>
<dbReference type="KEGG" id="mmu:67811"/>
<dbReference type="UCSC" id="uc007kjo.1">
    <property type="organism name" value="mouse"/>
</dbReference>
<dbReference type="AGR" id="MGI:1915061"/>
<dbReference type="CTD" id="26073"/>
<dbReference type="MGI" id="MGI:1915061">
    <property type="gene designation" value="Poldip2"/>
</dbReference>
<dbReference type="VEuPathDB" id="HostDB:ENSMUSG00000001100"/>
<dbReference type="eggNOG" id="KOG4408">
    <property type="taxonomic scope" value="Eukaryota"/>
</dbReference>
<dbReference type="GeneTree" id="ENSGT00940000153571"/>
<dbReference type="HOGENOM" id="CLU_051858_0_0_1"/>
<dbReference type="InParanoid" id="Q91VA6"/>
<dbReference type="OMA" id="IMPYSST"/>
<dbReference type="OrthoDB" id="5913487at2759"/>
<dbReference type="PhylomeDB" id="Q91VA6"/>
<dbReference type="TreeFam" id="TF314882"/>
<dbReference type="BioGRID-ORCS" id="67811">
    <property type="hits" value="9 hits in 77 CRISPR screens"/>
</dbReference>
<dbReference type="ChiTaRS" id="Poldip2">
    <property type="organism name" value="mouse"/>
</dbReference>
<dbReference type="PRO" id="PR:Q91VA6"/>
<dbReference type="Proteomes" id="UP000000589">
    <property type="component" value="Chromosome 11"/>
</dbReference>
<dbReference type="RNAct" id="Q91VA6">
    <property type="molecule type" value="protein"/>
</dbReference>
<dbReference type="Bgee" id="ENSMUSG00000001100">
    <property type="expression patterns" value="Expressed in spermatocyte and 279 other cell types or tissues"/>
</dbReference>
<dbReference type="ExpressionAtlas" id="Q91VA6">
    <property type="expression patterns" value="baseline and differential"/>
</dbReference>
<dbReference type="GO" id="GO:0005911">
    <property type="term" value="C:cell-cell junction"/>
    <property type="evidence" value="ECO:0007669"/>
    <property type="project" value="Ensembl"/>
</dbReference>
<dbReference type="GO" id="GO:0030496">
    <property type="term" value="C:midbody"/>
    <property type="evidence" value="ECO:0007669"/>
    <property type="project" value="Ensembl"/>
</dbReference>
<dbReference type="GO" id="GO:0005759">
    <property type="term" value="C:mitochondrial matrix"/>
    <property type="evidence" value="ECO:0000250"/>
    <property type="project" value="UniProtKB"/>
</dbReference>
<dbReference type="GO" id="GO:0042645">
    <property type="term" value="C:mitochondrial nucleoid"/>
    <property type="evidence" value="ECO:0007669"/>
    <property type="project" value="Ensembl"/>
</dbReference>
<dbReference type="GO" id="GO:0005739">
    <property type="term" value="C:mitochondrion"/>
    <property type="evidence" value="ECO:0000314"/>
    <property type="project" value="MGI"/>
</dbReference>
<dbReference type="GO" id="GO:0072686">
    <property type="term" value="C:mitotic spindle"/>
    <property type="evidence" value="ECO:0007669"/>
    <property type="project" value="Ensembl"/>
</dbReference>
<dbReference type="GO" id="GO:0005634">
    <property type="term" value="C:nucleus"/>
    <property type="evidence" value="ECO:0000250"/>
    <property type="project" value="UniProtKB"/>
</dbReference>
<dbReference type="GO" id="GO:0003677">
    <property type="term" value="F:DNA binding"/>
    <property type="evidence" value="ECO:0007669"/>
    <property type="project" value="InterPro"/>
</dbReference>
<dbReference type="GO" id="GO:0030674">
    <property type="term" value="F:protein-macromolecule adaptor activity"/>
    <property type="evidence" value="ECO:0000266"/>
    <property type="project" value="MGI"/>
</dbReference>
<dbReference type="GO" id="GO:0070987">
    <property type="term" value="P:error-free translesion synthesis"/>
    <property type="evidence" value="ECO:0000250"/>
    <property type="project" value="UniProtKB"/>
</dbReference>
<dbReference type="GO" id="GO:0007005">
    <property type="term" value="P:mitochondrion organization"/>
    <property type="evidence" value="ECO:0000315"/>
    <property type="project" value="MGI"/>
</dbReference>
<dbReference type="GO" id="GO:0090307">
    <property type="term" value="P:mitotic spindle assembly"/>
    <property type="evidence" value="ECO:0007669"/>
    <property type="project" value="Ensembl"/>
</dbReference>
<dbReference type="GO" id="GO:0016242">
    <property type="term" value="P:negative regulation of macroautophagy"/>
    <property type="evidence" value="ECO:0000315"/>
    <property type="project" value="MGI"/>
</dbReference>
<dbReference type="GO" id="GO:0051894">
    <property type="term" value="P:positive regulation of focal adhesion assembly"/>
    <property type="evidence" value="ECO:0007669"/>
    <property type="project" value="Ensembl"/>
</dbReference>
<dbReference type="GO" id="GO:0045931">
    <property type="term" value="P:positive regulation of mitotic cell cycle"/>
    <property type="evidence" value="ECO:0000315"/>
    <property type="project" value="MGI"/>
</dbReference>
<dbReference type="GO" id="GO:1903490">
    <property type="term" value="P:positive regulation of mitotic cytokinesis"/>
    <property type="evidence" value="ECO:0007669"/>
    <property type="project" value="Ensembl"/>
</dbReference>
<dbReference type="GO" id="GO:1990874">
    <property type="term" value="P:vascular associated smooth muscle cell proliferation"/>
    <property type="evidence" value="ECO:0007669"/>
    <property type="project" value="Ensembl"/>
</dbReference>
<dbReference type="FunFam" id="2.60.40.1470:FF:000001">
    <property type="entry name" value="DNA polymerase delta-interacting protein 2"/>
    <property type="match status" value="1"/>
</dbReference>
<dbReference type="Gene3D" id="2.60.40.1470">
    <property type="entry name" value="ApaG domain"/>
    <property type="match status" value="1"/>
</dbReference>
<dbReference type="InterPro" id="IPR007474">
    <property type="entry name" value="ApaG_domain"/>
</dbReference>
<dbReference type="InterPro" id="IPR036767">
    <property type="entry name" value="ApaG_sf"/>
</dbReference>
<dbReference type="InterPro" id="IPR011722">
    <property type="entry name" value="Hemimethylated_DNA-bd_dom"/>
</dbReference>
<dbReference type="InterPro" id="IPR036623">
    <property type="entry name" value="Hemimethylated_DNA-bd_sf"/>
</dbReference>
<dbReference type="NCBIfam" id="NF003967">
    <property type="entry name" value="PRK05461.1"/>
    <property type="match status" value="1"/>
</dbReference>
<dbReference type="PANTHER" id="PTHR14289">
    <property type="entry name" value="F-BOX ONLY PROTEIN 3"/>
    <property type="match status" value="1"/>
</dbReference>
<dbReference type="PANTHER" id="PTHR14289:SF16">
    <property type="entry name" value="POLYMERASE DELTA-INTERACTING PROTEIN 2"/>
    <property type="match status" value="1"/>
</dbReference>
<dbReference type="Pfam" id="PF04379">
    <property type="entry name" value="DUF525"/>
    <property type="match status" value="1"/>
</dbReference>
<dbReference type="Pfam" id="PF08755">
    <property type="entry name" value="YccV-like"/>
    <property type="match status" value="1"/>
</dbReference>
<dbReference type="SMART" id="SM00992">
    <property type="entry name" value="YccV-like"/>
    <property type="match status" value="1"/>
</dbReference>
<dbReference type="SUPFAM" id="SSF110069">
    <property type="entry name" value="ApaG-like"/>
    <property type="match status" value="1"/>
</dbReference>
<dbReference type="SUPFAM" id="SSF141255">
    <property type="entry name" value="YccV-like"/>
    <property type="match status" value="1"/>
</dbReference>
<dbReference type="PROSITE" id="PS51087">
    <property type="entry name" value="APAG"/>
    <property type="match status" value="1"/>
</dbReference>
<evidence type="ECO:0000250" key="1">
    <source>
        <dbReference type="UniProtKB" id="Q9Y2S7"/>
    </source>
</evidence>
<evidence type="ECO:0000255" key="2"/>
<evidence type="ECO:0000255" key="3">
    <source>
        <dbReference type="PROSITE-ProRule" id="PRU00412"/>
    </source>
</evidence>
<evidence type="ECO:0000312" key="4">
    <source>
        <dbReference type="MGI" id="MGI:1915061"/>
    </source>
</evidence>
<protein>
    <recommendedName>
        <fullName evidence="1">Polymerase delta-interacting protein 2</fullName>
    </recommendedName>
</protein>
<reference key="1">
    <citation type="journal article" date="2004" name="Genome Res.">
        <title>The status, quality, and expansion of the NIH full-length cDNA project: the Mammalian Gene Collection (MGC).</title>
        <authorList>
            <consortium name="The MGC Project Team"/>
        </authorList>
    </citation>
    <scope>NUCLEOTIDE SEQUENCE [LARGE SCALE MRNA]</scope>
    <source>
        <strain>FVB/N</strain>
        <tissue>Mammary tumor</tissue>
        <tissue>Salivary gland</tissue>
    </source>
</reference>
<reference key="2">
    <citation type="journal article" date="2010" name="Cell">
        <title>A tissue-specific atlas of mouse protein phosphorylation and expression.</title>
        <authorList>
            <person name="Huttlin E.L."/>
            <person name="Jedrychowski M.P."/>
            <person name="Elias J.E."/>
            <person name="Goswami T."/>
            <person name="Rad R."/>
            <person name="Beausoleil S.A."/>
            <person name="Villen J."/>
            <person name="Haas W."/>
            <person name="Sowa M.E."/>
            <person name="Gygi S.P."/>
        </authorList>
    </citation>
    <scope>IDENTIFICATION BY MASS SPECTROMETRY [LARGE SCALE ANALYSIS]</scope>
    <source>
        <tissue>Brain</tissue>
        <tissue>Brown adipose tissue</tissue>
        <tissue>Heart</tissue>
        <tissue>Kidney</tissue>
        <tissue>Liver</tissue>
        <tissue>Lung</tissue>
        <tissue>Pancreas</tissue>
        <tissue>Spleen</tissue>
        <tissue>Testis</tissue>
    </source>
</reference>
<feature type="transit peptide" description="Mitochondrion" evidence="2">
    <location>
        <begin position="1"/>
        <end position="21"/>
    </location>
</feature>
<feature type="chain" id="PRO_0000197976" description="Polymerase delta-interacting protein 2" evidence="2">
    <location>
        <begin position="22"/>
        <end position="368"/>
    </location>
</feature>
<feature type="domain" description="ApaG" evidence="3">
    <location>
        <begin position="235"/>
        <end position="360"/>
    </location>
</feature>
<feature type="modified residue" description="Phosphothreonine" evidence="1">
    <location>
        <position position="292"/>
    </location>
</feature>
<organism>
    <name type="scientific">Mus musculus</name>
    <name type="common">Mouse</name>
    <dbReference type="NCBI Taxonomy" id="10090"/>
    <lineage>
        <taxon>Eukaryota</taxon>
        <taxon>Metazoa</taxon>
        <taxon>Chordata</taxon>
        <taxon>Craniata</taxon>
        <taxon>Vertebrata</taxon>
        <taxon>Euteleostomi</taxon>
        <taxon>Mammalia</taxon>
        <taxon>Eutheria</taxon>
        <taxon>Euarchontoglires</taxon>
        <taxon>Glires</taxon>
        <taxon>Rodentia</taxon>
        <taxon>Myomorpha</taxon>
        <taxon>Muroidea</taxon>
        <taxon>Muridae</taxon>
        <taxon>Murinae</taxon>
        <taxon>Mus</taxon>
        <taxon>Mus</taxon>
    </lineage>
</organism>